<comment type="function">
    <text evidence="1">Part of the twin-arginine translocation (Tat) system that transports large folded proteins containing a characteristic twin-arginine motif in their signal peptide across membranes. TatA could form the protein-conducting channel of the Tat system.</text>
</comment>
<comment type="subunit">
    <text evidence="1">The Tat system comprises two distinct complexes: a TatABC complex, containing multiple copies of TatA, TatB and TatC subunits, and a separate TatA complex, containing only TatA subunits. Substrates initially bind to the TatABC complex, which probably triggers association of the separate TatA complex to form the active translocon.</text>
</comment>
<comment type="subcellular location">
    <subcellularLocation>
        <location evidence="1">Cell inner membrane</location>
        <topology evidence="1">Single-pass membrane protein</topology>
    </subcellularLocation>
</comment>
<comment type="similarity">
    <text evidence="1">Belongs to the TatA/E family.</text>
</comment>
<evidence type="ECO:0000255" key="1">
    <source>
        <dbReference type="HAMAP-Rule" id="MF_00236"/>
    </source>
</evidence>
<evidence type="ECO:0000256" key="2">
    <source>
        <dbReference type="SAM" id="MobiDB-lite"/>
    </source>
</evidence>
<feature type="chain" id="PRO_1000125181" description="Sec-independent protein translocase protein TatA">
    <location>
        <begin position="1"/>
        <end position="71"/>
    </location>
</feature>
<feature type="transmembrane region" description="Helical" evidence="1">
    <location>
        <begin position="1"/>
        <end position="21"/>
    </location>
</feature>
<feature type="region of interest" description="Disordered" evidence="2">
    <location>
        <begin position="40"/>
        <end position="71"/>
    </location>
</feature>
<feature type="compositionally biased region" description="Basic and acidic residues" evidence="2">
    <location>
        <begin position="61"/>
        <end position="71"/>
    </location>
</feature>
<dbReference type="EMBL" id="CP000633">
    <property type="protein sequence ID" value="ACM36919.1"/>
    <property type="molecule type" value="Genomic_DNA"/>
</dbReference>
<dbReference type="RefSeq" id="WP_015916340.1">
    <property type="nucleotide sequence ID" value="NC_011989.1"/>
</dbReference>
<dbReference type="SMR" id="B9JXE1"/>
<dbReference type="STRING" id="311402.Avi_2668"/>
<dbReference type="KEGG" id="avi:Avi_2668"/>
<dbReference type="eggNOG" id="COG1826">
    <property type="taxonomic scope" value="Bacteria"/>
</dbReference>
<dbReference type="HOGENOM" id="CLU_086034_5_0_5"/>
<dbReference type="Proteomes" id="UP000001596">
    <property type="component" value="Chromosome 1"/>
</dbReference>
<dbReference type="GO" id="GO:0033281">
    <property type="term" value="C:TAT protein transport complex"/>
    <property type="evidence" value="ECO:0007669"/>
    <property type="project" value="UniProtKB-UniRule"/>
</dbReference>
<dbReference type="GO" id="GO:0008320">
    <property type="term" value="F:protein transmembrane transporter activity"/>
    <property type="evidence" value="ECO:0007669"/>
    <property type="project" value="UniProtKB-UniRule"/>
</dbReference>
<dbReference type="GO" id="GO:0043953">
    <property type="term" value="P:protein transport by the Tat complex"/>
    <property type="evidence" value="ECO:0007669"/>
    <property type="project" value="UniProtKB-UniRule"/>
</dbReference>
<dbReference type="Gene3D" id="1.20.5.3310">
    <property type="match status" value="1"/>
</dbReference>
<dbReference type="HAMAP" id="MF_00236">
    <property type="entry name" value="TatA_E"/>
    <property type="match status" value="1"/>
</dbReference>
<dbReference type="InterPro" id="IPR003369">
    <property type="entry name" value="TatA/B/E"/>
</dbReference>
<dbReference type="InterPro" id="IPR006312">
    <property type="entry name" value="TatA/E"/>
</dbReference>
<dbReference type="NCBIfam" id="NF001940">
    <property type="entry name" value="PRK00720.1"/>
    <property type="match status" value="1"/>
</dbReference>
<dbReference type="NCBIfam" id="TIGR01411">
    <property type="entry name" value="tatAE"/>
    <property type="match status" value="1"/>
</dbReference>
<dbReference type="PANTHER" id="PTHR42982">
    <property type="entry name" value="SEC-INDEPENDENT PROTEIN TRANSLOCASE PROTEIN TATA"/>
    <property type="match status" value="1"/>
</dbReference>
<dbReference type="PANTHER" id="PTHR42982:SF1">
    <property type="entry name" value="SEC-INDEPENDENT PROTEIN TRANSLOCASE PROTEIN TATA"/>
    <property type="match status" value="1"/>
</dbReference>
<dbReference type="Pfam" id="PF02416">
    <property type="entry name" value="TatA_B_E"/>
    <property type="match status" value="1"/>
</dbReference>
<accession>B9JXE1</accession>
<keyword id="KW-0997">Cell inner membrane</keyword>
<keyword id="KW-1003">Cell membrane</keyword>
<keyword id="KW-0472">Membrane</keyword>
<keyword id="KW-0653">Protein transport</keyword>
<keyword id="KW-1185">Reference proteome</keyword>
<keyword id="KW-0811">Translocation</keyword>
<keyword id="KW-0812">Transmembrane</keyword>
<keyword id="KW-1133">Transmembrane helix</keyword>
<keyword id="KW-0813">Transport</keyword>
<organism>
    <name type="scientific">Allorhizobium ampelinum (strain ATCC BAA-846 / DSM 112012 / S4)</name>
    <name type="common">Agrobacterium vitis (strain S4)</name>
    <dbReference type="NCBI Taxonomy" id="311402"/>
    <lineage>
        <taxon>Bacteria</taxon>
        <taxon>Pseudomonadati</taxon>
        <taxon>Pseudomonadota</taxon>
        <taxon>Alphaproteobacteria</taxon>
        <taxon>Hyphomicrobiales</taxon>
        <taxon>Rhizobiaceae</taxon>
        <taxon>Rhizobium/Agrobacterium group</taxon>
        <taxon>Allorhizobium</taxon>
        <taxon>Allorhizobium ampelinum</taxon>
    </lineage>
</organism>
<protein>
    <recommendedName>
        <fullName evidence="1">Sec-independent protein translocase protein TatA</fullName>
    </recommendedName>
</protein>
<gene>
    <name evidence="1" type="primary">tatA</name>
    <name type="ordered locus">Avi_2668</name>
</gene>
<name>TATA_ALLAM</name>
<sequence>MGSFSMWHWLIVLAIVLLLFGRGKIPELMGDVAKGIKSFKKGMSDDDTAPDGTPKPADQSKTVDHRADDHK</sequence>
<proteinExistence type="inferred from homology"/>
<reference key="1">
    <citation type="journal article" date="2009" name="J. Bacteriol.">
        <title>Genome sequences of three Agrobacterium biovars help elucidate the evolution of multichromosome genomes in bacteria.</title>
        <authorList>
            <person name="Slater S.C."/>
            <person name="Goldman B.S."/>
            <person name="Goodner B."/>
            <person name="Setubal J.C."/>
            <person name="Farrand S.K."/>
            <person name="Nester E.W."/>
            <person name="Burr T.J."/>
            <person name="Banta L."/>
            <person name="Dickerman A.W."/>
            <person name="Paulsen I."/>
            <person name="Otten L."/>
            <person name="Suen G."/>
            <person name="Welch R."/>
            <person name="Almeida N.F."/>
            <person name="Arnold F."/>
            <person name="Burton O.T."/>
            <person name="Du Z."/>
            <person name="Ewing A."/>
            <person name="Godsy E."/>
            <person name="Heisel S."/>
            <person name="Houmiel K.L."/>
            <person name="Jhaveri J."/>
            <person name="Lu J."/>
            <person name="Miller N.M."/>
            <person name="Norton S."/>
            <person name="Chen Q."/>
            <person name="Phoolcharoen W."/>
            <person name="Ohlin V."/>
            <person name="Ondrusek D."/>
            <person name="Pride N."/>
            <person name="Stricklin S.L."/>
            <person name="Sun J."/>
            <person name="Wheeler C."/>
            <person name="Wilson L."/>
            <person name="Zhu H."/>
            <person name="Wood D.W."/>
        </authorList>
    </citation>
    <scope>NUCLEOTIDE SEQUENCE [LARGE SCALE GENOMIC DNA]</scope>
    <source>
        <strain>ATCC BAA-846 / DSM 112012 / S4</strain>
    </source>
</reference>